<keyword id="KW-1015">Disulfide bond</keyword>
<keyword id="KW-0611">Plant defense</keyword>
<keyword id="KW-1185">Reference proteome</keyword>
<keyword id="KW-0964">Secreted</keyword>
<keyword id="KW-0732">Signal</keyword>
<name>XIP_ORYSJ</name>
<accession>Q5WMW5</accession>
<gene>
    <name evidence="6" type="primary">XIP</name>
    <name evidence="9" type="ordered locus">Os05g0247800</name>
    <name evidence="7" type="ordered locus">LOC_Os05g15880</name>
    <name evidence="8" type="ORF">OJ1037_G10.8</name>
    <name evidence="10" type="ORF">OsJ_17793</name>
</gene>
<proteinExistence type="evidence at transcript level"/>
<feature type="signal peptide" evidence="2">
    <location>
        <begin position="1"/>
        <end position="21"/>
    </location>
</feature>
<feature type="chain" id="PRO_5015098067" description="Xylanase inhibitor protein XIP">
    <location>
        <begin position="22"/>
        <end position="293"/>
    </location>
</feature>
<feature type="domain" description="GH18" evidence="3">
    <location>
        <begin position="31"/>
        <end position="293"/>
    </location>
</feature>
<feature type="disulfide bond" evidence="1">
    <location>
        <begin position="50"/>
        <end position="92"/>
    </location>
</feature>
<feature type="disulfide bond" evidence="1">
    <location>
        <begin position="189"/>
        <end position="218"/>
    </location>
</feature>
<sequence>MALRRLAALLSLAVLLSAGLAAVSATSQNTGDTVIIWGRNKDEGSLREACDAGRYTTVIISFLSAFGYIPGTYKLDISGHQVSAVGPDIKYCQSKGKLILLAIGGQGGEYSLPSSQAAVDLHDHLWYSYLGGRRNGVYRPFGDANVNGIDFFIDQGAREHYNELAKMLYDHNKDYRATVGVMVTATTRCGYPDHRLDEALATGLFHRIHVKMFSDGRCPAWSRRQSFEKWAKTYPQSRVLIGVVASPDVDKDAYMPPEALNNLLQFINKQPNFGGVMVWDRFYDKKTGFTAHL</sequence>
<evidence type="ECO:0000250" key="1">
    <source>
        <dbReference type="UniProtKB" id="Q8L5C6"/>
    </source>
</evidence>
<evidence type="ECO:0000255" key="2"/>
<evidence type="ECO:0000255" key="3">
    <source>
        <dbReference type="PROSITE-ProRule" id="PRU01258"/>
    </source>
</evidence>
<evidence type="ECO:0000269" key="4">
    <source>
    </source>
</evidence>
<evidence type="ECO:0000269" key="5">
    <source>
    </source>
</evidence>
<evidence type="ECO:0000303" key="6">
    <source>
    </source>
</evidence>
<evidence type="ECO:0000305" key="7"/>
<evidence type="ECO:0000312" key="8">
    <source>
        <dbReference type="EMBL" id="AAV32103.1"/>
    </source>
</evidence>
<evidence type="ECO:0000312" key="9">
    <source>
        <dbReference type="EMBL" id="BAF16934.1"/>
    </source>
</evidence>
<evidence type="ECO:0000312" key="10">
    <source>
        <dbReference type="EMBL" id="EEE62985.1"/>
    </source>
</evidence>
<comment type="function">
    <text evidence="4 5">Fungal xylanase inhibitor (PubMed:17379695, PubMed:18511458). Possesses competitive inhibiting activity against several fungal endo-1,4-beta-D-xylanases belonging to glycoside hydrolase family 10 (GH10) and family 11 (GH11) (PubMed:17379695, PubMed:18511458). May function in plant defense against secreted fungal pathogen xylanases (PubMed:17379695, PubMed:18511458). Is similar to class III chitinases, but does not exhibit chitinase activity (PubMed:17379695, PubMed:18511458).</text>
</comment>
<comment type="subcellular location">
    <subcellularLocation>
        <location evidence="5">Secreted</location>
    </subcellularLocation>
</comment>
<comment type="tissue specificity">
    <text evidence="5">Expressed in mature grain.</text>
</comment>
<comment type="induction">
    <text evidence="4">Induced by exogenous treatment with ascorbate, dehydroascorbate, citrate, sodium chloride and methyl jasmonate in roots (PubMed:17379695). Induced by wounding in roots (PubMed:17379695).</text>
</comment>
<comment type="miscellaneous">
    <text evidence="5">Plants silencing XIP do not exhibit visible phenotype under normal growth conditions.</text>
</comment>
<comment type="similarity">
    <text evidence="7">Belongs to the glycosyl hydrolase 18 family. Xylanase inhibitor subfamily.</text>
</comment>
<organism>
    <name type="scientific">Oryza sativa subsp. japonica</name>
    <name type="common">Rice</name>
    <dbReference type="NCBI Taxonomy" id="39947"/>
    <lineage>
        <taxon>Eukaryota</taxon>
        <taxon>Viridiplantae</taxon>
        <taxon>Streptophyta</taxon>
        <taxon>Embryophyta</taxon>
        <taxon>Tracheophyta</taxon>
        <taxon>Spermatophyta</taxon>
        <taxon>Magnoliopsida</taxon>
        <taxon>Liliopsida</taxon>
        <taxon>Poales</taxon>
        <taxon>Poaceae</taxon>
        <taxon>BOP clade</taxon>
        <taxon>Oryzoideae</taxon>
        <taxon>Oryzeae</taxon>
        <taxon>Oryzinae</taxon>
        <taxon>Oryza</taxon>
        <taxon>Oryza sativa</taxon>
    </lineage>
</organism>
<protein>
    <recommendedName>
        <fullName evidence="7">Xylanase inhibitor protein XIP</fullName>
        <shortName evidence="6">OsXIP</shortName>
    </recommendedName>
    <alternativeName>
        <fullName evidence="7">Class III chitinase homolog XIP</fullName>
    </alternativeName>
</protein>
<reference key="1">
    <citation type="journal article" date="2005" name="Mol. Genet. Genomics">
        <title>A fine physical map of the rice chromosome 5.</title>
        <authorList>
            <person name="Cheng C.-H."/>
            <person name="Chung M.C."/>
            <person name="Liu S.-M."/>
            <person name="Chen S.-K."/>
            <person name="Kao F.Y."/>
            <person name="Lin S.-J."/>
            <person name="Hsiao S.-H."/>
            <person name="Tseng I.C."/>
            <person name="Hsing Y.-I.C."/>
            <person name="Wu H.-P."/>
            <person name="Chen C.-S."/>
            <person name="Shaw J.-F."/>
            <person name="Wu J."/>
            <person name="Matsumoto T."/>
            <person name="Sasaki T."/>
            <person name="Chen H.-C."/>
            <person name="Chow T.-Y."/>
        </authorList>
    </citation>
    <scope>NUCLEOTIDE SEQUENCE [LARGE SCALE GENOMIC DNA]</scope>
    <source>
        <strain>cv. Nipponbare</strain>
    </source>
</reference>
<reference key="2">
    <citation type="journal article" date="2005" name="Nature">
        <title>The map-based sequence of the rice genome.</title>
        <authorList>
            <consortium name="International rice genome sequencing project (IRGSP)"/>
        </authorList>
    </citation>
    <scope>NUCLEOTIDE SEQUENCE [LARGE SCALE GENOMIC DNA]</scope>
    <source>
        <strain>cv. Nipponbare</strain>
    </source>
</reference>
<reference key="3">
    <citation type="journal article" date="2008" name="Nucleic Acids Res.">
        <title>The rice annotation project database (RAP-DB): 2008 update.</title>
        <authorList>
            <consortium name="The rice annotation project (RAP)"/>
        </authorList>
    </citation>
    <scope>GENOME REANNOTATION</scope>
    <source>
        <strain>cv. Nipponbare</strain>
    </source>
</reference>
<reference key="4">
    <citation type="journal article" date="2013" name="Rice">
        <title>Improvement of the Oryza sativa Nipponbare reference genome using next generation sequence and optical map data.</title>
        <authorList>
            <person name="Kawahara Y."/>
            <person name="de la Bastide M."/>
            <person name="Hamilton J.P."/>
            <person name="Kanamori H."/>
            <person name="McCombie W.R."/>
            <person name="Ouyang S."/>
            <person name="Schwartz D.C."/>
            <person name="Tanaka T."/>
            <person name="Wu J."/>
            <person name="Zhou S."/>
            <person name="Childs K.L."/>
            <person name="Davidson R.M."/>
            <person name="Lin H."/>
            <person name="Quesada-Ocampo L."/>
            <person name="Vaillancourt B."/>
            <person name="Sakai H."/>
            <person name="Lee S.S."/>
            <person name="Kim J."/>
            <person name="Numa H."/>
            <person name="Itoh T."/>
            <person name="Buell C.R."/>
            <person name="Matsumoto T."/>
        </authorList>
    </citation>
    <scope>GENOME REANNOTATION</scope>
    <source>
        <strain>cv. Nipponbare</strain>
    </source>
</reference>
<reference key="5">
    <citation type="journal article" date="2005" name="PLoS Biol.">
        <title>The genomes of Oryza sativa: a history of duplications.</title>
        <authorList>
            <person name="Yu J."/>
            <person name="Wang J."/>
            <person name="Lin W."/>
            <person name="Li S."/>
            <person name="Li H."/>
            <person name="Zhou J."/>
            <person name="Ni P."/>
            <person name="Dong W."/>
            <person name="Hu S."/>
            <person name="Zeng C."/>
            <person name="Zhang J."/>
            <person name="Zhang Y."/>
            <person name="Li R."/>
            <person name="Xu Z."/>
            <person name="Li S."/>
            <person name="Li X."/>
            <person name="Zheng H."/>
            <person name="Cong L."/>
            <person name="Lin L."/>
            <person name="Yin J."/>
            <person name="Geng J."/>
            <person name="Li G."/>
            <person name="Shi J."/>
            <person name="Liu J."/>
            <person name="Lv H."/>
            <person name="Li J."/>
            <person name="Wang J."/>
            <person name="Deng Y."/>
            <person name="Ran L."/>
            <person name="Shi X."/>
            <person name="Wang X."/>
            <person name="Wu Q."/>
            <person name="Li C."/>
            <person name="Ren X."/>
            <person name="Wang J."/>
            <person name="Wang X."/>
            <person name="Li D."/>
            <person name="Liu D."/>
            <person name="Zhang X."/>
            <person name="Ji Z."/>
            <person name="Zhao W."/>
            <person name="Sun Y."/>
            <person name="Zhang Z."/>
            <person name="Bao J."/>
            <person name="Han Y."/>
            <person name="Dong L."/>
            <person name="Ji J."/>
            <person name="Chen P."/>
            <person name="Wu S."/>
            <person name="Liu J."/>
            <person name="Xiao Y."/>
            <person name="Bu D."/>
            <person name="Tan J."/>
            <person name="Yang L."/>
            <person name="Ye C."/>
            <person name="Zhang J."/>
            <person name="Xu J."/>
            <person name="Zhou Y."/>
            <person name="Yu Y."/>
            <person name="Zhang B."/>
            <person name="Zhuang S."/>
            <person name="Wei H."/>
            <person name="Liu B."/>
            <person name="Lei M."/>
            <person name="Yu H."/>
            <person name="Li Y."/>
            <person name="Xu H."/>
            <person name="Wei S."/>
            <person name="He X."/>
            <person name="Fang L."/>
            <person name="Zhang Z."/>
            <person name="Zhang Y."/>
            <person name="Huang X."/>
            <person name="Su Z."/>
            <person name="Tong W."/>
            <person name="Li J."/>
            <person name="Tong Z."/>
            <person name="Li S."/>
            <person name="Ye J."/>
            <person name="Wang L."/>
            <person name="Fang L."/>
            <person name="Lei T."/>
            <person name="Chen C.-S."/>
            <person name="Chen H.-C."/>
            <person name="Xu Z."/>
            <person name="Li H."/>
            <person name="Huang H."/>
            <person name="Zhang F."/>
            <person name="Xu H."/>
            <person name="Li N."/>
            <person name="Zhao C."/>
            <person name="Li S."/>
            <person name="Dong L."/>
            <person name="Huang Y."/>
            <person name="Li L."/>
            <person name="Xi Y."/>
            <person name="Qi Q."/>
            <person name="Li W."/>
            <person name="Zhang B."/>
            <person name="Hu W."/>
            <person name="Zhang Y."/>
            <person name="Tian X."/>
            <person name="Jiao Y."/>
            <person name="Liang X."/>
            <person name="Jin J."/>
            <person name="Gao L."/>
            <person name="Zheng W."/>
            <person name="Hao B."/>
            <person name="Liu S.-M."/>
            <person name="Wang W."/>
            <person name="Yuan L."/>
            <person name="Cao M."/>
            <person name="McDermott J."/>
            <person name="Samudrala R."/>
            <person name="Wang J."/>
            <person name="Wong G.K.-S."/>
            <person name="Yang H."/>
        </authorList>
    </citation>
    <scope>NUCLEOTIDE SEQUENCE [LARGE SCALE GENOMIC DNA]</scope>
    <source>
        <strain>cv. Nipponbare</strain>
    </source>
</reference>
<reference key="6">
    <citation type="journal article" date="2003" name="Science">
        <title>Collection, mapping, and annotation of over 28,000 cDNA clones from japonica rice.</title>
        <authorList>
            <consortium name="The rice full-length cDNA consortium"/>
        </authorList>
    </citation>
    <scope>NUCLEOTIDE SEQUENCE [LARGE SCALE MRNA]</scope>
    <source>
        <strain>cv. Nipponbare</strain>
    </source>
</reference>
<reference key="7">
    <citation type="journal article" date="2007" name="Plant Cell Physiol.">
        <title>Induction of a novel XIP-type xylanase inhibitor by external ascorbic acid treatment and differential expression of XIP-family genes in rice.</title>
        <authorList>
            <person name="Tokunaga T."/>
            <person name="Esaka M."/>
        </authorList>
    </citation>
    <scope>FUNCTION</scope>
    <scope>INDUCTION</scope>
</reference>
<reference key="8">
    <citation type="journal article" date="2008" name="Plant Cell Physiol.">
        <title>RNAi-mediated knockdown of the XIP-type endoxylanase inhibitor gene, OsXIP, has no effect on grain development and germination in rice.</title>
        <authorList>
            <person name="Tokunaga T."/>
            <person name="Miyata Y."/>
            <person name="Fujikawa Y."/>
            <person name="Esaka M."/>
        </authorList>
    </citation>
    <scope>FUNCTION</scope>
    <scope>SUBCELLULAR LOCATION</scope>
    <scope>TISSUE SPECIFICITY</scope>
</reference>
<dbReference type="EMBL" id="AC104270">
    <property type="protein sequence ID" value="AAV32103.1"/>
    <property type="molecule type" value="Genomic_DNA"/>
</dbReference>
<dbReference type="EMBL" id="AP008211">
    <property type="protein sequence ID" value="BAF16934.1"/>
    <property type="molecule type" value="Genomic_DNA"/>
</dbReference>
<dbReference type="EMBL" id="AP014961">
    <property type="protein sequence ID" value="BAS93008.1"/>
    <property type="molecule type" value="Genomic_DNA"/>
</dbReference>
<dbReference type="EMBL" id="CM000142">
    <property type="protein sequence ID" value="EEE62985.1"/>
    <property type="molecule type" value="Genomic_DNA"/>
</dbReference>
<dbReference type="EMBL" id="AK073843">
    <property type="protein sequence ID" value="BAG93671.1"/>
    <property type="molecule type" value="mRNA"/>
</dbReference>
<dbReference type="SMR" id="Q5WMW5"/>
<dbReference type="FunCoup" id="Q5WMW5">
    <property type="interactions" value="131"/>
</dbReference>
<dbReference type="STRING" id="39947.Q5WMW5"/>
<dbReference type="CAZy" id="GH18">
    <property type="family name" value="Glycoside Hydrolase Family 18"/>
</dbReference>
<dbReference type="PaxDb" id="39947-Q5WMW5"/>
<dbReference type="EnsemblPlants" id="Os05t0247800-01">
    <property type="protein sequence ID" value="Os05t0247800-01"/>
    <property type="gene ID" value="Os05g0247800"/>
</dbReference>
<dbReference type="Gramene" id="Os05t0247800-01">
    <property type="protein sequence ID" value="Os05t0247800-01"/>
    <property type="gene ID" value="Os05g0247800"/>
</dbReference>
<dbReference type="KEGG" id="dosa:Os05g0247800"/>
<dbReference type="KEGG" id="osa:4338211"/>
<dbReference type="eggNOG" id="KOG4701">
    <property type="taxonomic scope" value="Eukaryota"/>
</dbReference>
<dbReference type="HOGENOM" id="CLU_007818_0_1_1"/>
<dbReference type="InParanoid" id="Q5WMW5"/>
<dbReference type="OMA" id="RNEACCL"/>
<dbReference type="OrthoDB" id="6020543at2759"/>
<dbReference type="Proteomes" id="UP000000763">
    <property type="component" value="Chromosome 5"/>
</dbReference>
<dbReference type="Proteomes" id="UP000007752">
    <property type="component" value="Chromosome 5"/>
</dbReference>
<dbReference type="Proteomes" id="UP000059680">
    <property type="component" value="Chromosome 5"/>
</dbReference>
<dbReference type="GO" id="GO:0005576">
    <property type="term" value="C:extracellular region"/>
    <property type="evidence" value="ECO:0000314"/>
    <property type="project" value="UniProtKB"/>
</dbReference>
<dbReference type="GO" id="GO:0004857">
    <property type="term" value="F:enzyme inhibitor activity"/>
    <property type="evidence" value="ECO:0000314"/>
    <property type="project" value="UniProtKB"/>
</dbReference>
<dbReference type="GO" id="GO:0005975">
    <property type="term" value="P:carbohydrate metabolic process"/>
    <property type="evidence" value="ECO:0007669"/>
    <property type="project" value="InterPro"/>
</dbReference>
<dbReference type="GO" id="GO:0050832">
    <property type="term" value="P:defense response to fungus"/>
    <property type="evidence" value="ECO:0000314"/>
    <property type="project" value="UniProtKB"/>
</dbReference>
<dbReference type="CDD" id="cd02877">
    <property type="entry name" value="GH18_hevamine_XipI_class_III"/>
    <property type="match status" value="1"/>
</dbReference>
<dbReference type="FunFam" id="3.20.20.80:FF:000044">
    <property type="entry name" value="Chitinase III C10701-rice"/>
    <property type="match status" value="1"/>
</dbReference>
<dbReference type="Gene3D" id="3.20.20.80">
    <property type="entry name" value="Glycosidases"/>
    <property type="match status" value="1"/>
</dbReference>
<dbReference type="InterPro" id="IPR045321">
    <property type="entry name" value="Cts1-like"/>
</dbReference>
<dbReference type="InterPro" id="IPR001223">
    <property type="entry name" value="Glyco_hydro18_cat"/>
</dbReference>
<dbReference type="InterPro" id="IPR017853">
    <property type="entry name" value="Glycoside_hydrolase_SF"/>
</dbReference>
<dbReference type="InterPro" id="IPR050542">
    <property type="entry name" value="Glycosyl_Hydrlase18_Chitinase"/>
</dbReference>
<dbReference type="PANTHER" id="PTHR45708">
    <property type="entry name" value="ENDOCHITINASE"/>
    <property type="match status" value="1"/>
</dbReference>
<dbReference type="PANTHER" id="PTHR45708:SF11">
    <property type="entry name" value="XYLANASE INHIBITOR PROTEIN XIP"/>
    <property type="match status" value="1"/>
</dbReference>
<dbReference type="SUPFAM" id="SSF51445">
    <property type="entry name" value="(Trans)glycosidases"/>
    <property type="match status" value="1"/>
</dbReference>
<dbReference type="PROSITE" id="PS51910">
    <property type="entry name" value="GH18_2"/>
    <property type="match status" value="1"/>
</dbReference>